<reference key="1">
    <citation type="journal article" date="1994" name="J. Biol. Chem.">
        <title>Aryl-alcohol dehydrogenase from the white-rot fungus Phanerochaete chrysosporium. Gene cloning, sequence analysis, expression, and purification of the recombinant enzyme.</title>
        <authorList>
            <person name="Reiser J."/>
            <person name="Muheim A."/>
            <person name="Hardegger M."/>
            <person name="Frank G."/>
            <person name="Fiechter A."/>
        </authorList>
    </citation>
    <scope>NUCLEOTIDE SEQUENCE [MRNA]</scope>
    <scope>PARTIAL PROTEIN SEQUENCE</scope>
    <source>
        <strain>ATCC 24725 / DSM 6909 / CBS 481.73 / BCRC 36200 / NRRL 6361 / VKM F-1767</strain>
    </source>
</reference>
<comment type="catalytic activity">
    <reaction>
        <text>an aromatic primary alcohol + NADP(+) = an aromatic aldehyde + NADPH + H(+)</text>
        <dbReference type="Rhea" id="RHEA:17761"/>
        <dbReference type="ChEBI" id="CHEBI:15378"/>
        <dbReference type="ChEBI" id="CHEBI:33855"/>
        <dbReference type="ChEBI" id="CHEBI:33857"/>
        <dbReference type="ChEBI" id="CHEBI:57783"/>
        <dbReference type="ChEBI" id="CHEBI:58349"/>
        <dbReference type="EC" id="1.1.1.91"/>
    </reaction>
</comment>
<comment type="PTM">
    <text>The N-terminus is blocked.</text>
</comment>
<comment type="similarity">
    <text evidence="2">Belongs to the aldo/keto reductase family. Aldo/keto reductase 2 subfamily.</text>
</comment>
<feature type="chain" id="PRO_0000070364" description="Aryl-alcohol dehydrogenase [NADP(+)]">
    <location>
        <begin position="1"/>
        <end position="385"/>
    </location>
</feature>
<feature type="active site" description="Proton donor" evidence="1">
    <location>
        <position position="76"/>
    </location>
</feature>
<feature type="binding site" evidence="1">
    <location>
        <begin position="238"/>
        <end position="248"/>
    </location>
    <ligand>
        <name>NADP(+)</name>
        <dbReference type="ChEBI" id="CHEBI:58349"/>
    </ligand>
</feature>
<organism>
    <name type="scientific">Phanerodontia chrysosporium</name>
    <name type="common">White-rot fungus</name>
    <name type="synonym">Sporotrichum pruinosum</name>
    <dbReference type="NCBI Taxonomy" id="2822231"/>
    <lineage>
        <taxon>Eukaryota</taxon>
        <taxon>Fungi</taxon>
        <taxon>Dikarya</taxon>
        <taxon>Basidiomycota</taxon>
        <taxon>Agaricomycotina</taxon>
        <taxon>Agaricomycetes</taxon>
        <taxon>Polyporales</taxon>
        <taxon>Phanerochaetaceae</taxon>
        <taxon>Phanerodontia</taxon>
    </lineage>
</organism>
<accession>Q01752</accession>
<protein>
    <recommendedName>
        <fullName>Aryl-alcohol dehydrogenase [NADP(+)]</fullName>
        <shortName>AAD</shortName>
        <ecNumber>1.1.1.91</ecNumber>
    </recommendedName>
</protein>
<evidence type="ECO:0000250" key="1"/>
<evidence type="ECO:0000305" key="2"/>
<name>AAD_PHACH</name>
<keyword id="KW-0058">Aromatic hydrocarbons catabolism</keyword>
<keyword id="KW-0903">Direct protein sequencing</keyword>
<keyword id="KW-0521">NADP</keyword>
<keyword id="KW-0560">Oxidoreductase</keyword>
<dbReference type="EC" id="1.1.1.91"/>
<dbReference type="EMBL" id="L08964">
    <property type="protein sequence ID" value="AAA61931.1"/>
    <property type="molecule type" value="mRNA"/>
</dbReference>
<dbReference type="PIR" id="A55449">
    <property type="entry name" value="A55449"/>
</dbReference>
<dbReference type="SMR" id="Q01752"/>
<dbReference type="EnsemblFungi" id="AGR57_3931T0">
    <property type="protein sequence ID" value="AGR57_3931T0-p1"/>
    <property type="gene ID" value="AGR57_3931"/>
</dbReference>
<dbReference type="VEuPathDB" id="FungiDB:AGR57_3931"/>
<dbReference type="OMA" id="SNYLGWQ"/>
<dbReference type="GO" id="GO:0047681">
    <property type="term" value="F:aryl-alcohol dehydrogenase (NADP+) activity"/>
    <property type="evidence" value="ECO:0007669"/>
    <property type="project" value="UniProtKB-EC"/>
</dbReference>
<dbReference type="GO" id="GO:0009056">
    <property type="term" value="P:catabolic process"/>
    <property type="evidence" value="ECO:0007669"/>
    <property type="project" value="UniProtKB-KW"/>
</dbReference>
<dbReference type="CDD" id="cd19146">
    <property type="entry name" value="AKR_AKR9A1-2"/>
    <property type="match status" value="1"/>
</dbReference>
<dbReference type="FunFam" id="3.20.20.100:FF:000024">
    <property type="entry name" value="Aryl-alcohol dehydrogenase"/>
    <property type="match status" value="1"/>
</dbReference>
<dbReference type="Gene3D" id="3.20.20.100">
    <property type="entry name" value="NADP-dependent oxidoreductase domain"/>
    <property type="match status" value="1"/>
</dbReference>
<dbReference type="InterPro" id="IPR050523">
    <property type="entry name" value="AKR_Detox_Biosynth"/>
</dbReference>
<dbReference type="InterPro" id="IPR023210">
    <property type="entry name" value="NADP_OxRdtase_dom"/>
</dbReference>
<dbReference type="InterPro" id="IPR036812">
    <property type="entry name" value="NADP_OxRdtase_dom_sf"/>
</dbReference>
<dbReference type="PANTHER" id="PTHR43364:SF2">
    <property type="entry name" value="ARYL-ALCOHOL DEHYDROGENASE AAD10-RELATED"/>
    <property type="match status" value="1"/>
</dbReference>
<dbReference type="PANTHER" id="PTHR43364">
    <property type="entry name" value="NADH-SPECIFIC METHYLGLYOXAL REDUCTASE-RELATED"/>
    <property type="match status" value="1"/>
</dbReference>
<dbReference type="Pfam" id="PF00248">
    <property type="entry name" value="Aldo_ket_red"/>
    <property type="match status" value="1"/>
</dbReference>
<dbReference type="SUPFAM" id="SSF51430">
    <property type="entry name" value="NAD(P)-linked oxidoreductase"/>
    <property type="match status" value="1"/>
</dbReference>
<sequence length="385" mass="43563">MNIWAPAPEPPTKLGRHRQLAPGCGLHVSPIQLGAMSIGDKWHPYGMGTMDKEASFKLLDAFYNAGGNFIDTANVYQDETSEEFIGEWMEARGNRDQMVVATKYSLVYKRGASFEEIPQKTQYVGNSLKSMHISVHDSLRKLRTSYIDIFYVHFWDYTCTIEEVMNGLHNLVAQGKVLYLGVSDTPAWVVSKANNYARMAGKTPFVIYEGEWNITMRDMERDIIPMCIHEGMAIAPWNVLCAGKIRTDAEEERRLKSGEGGRTLLQFDGWLRNETERKVSKALEKVAEEIGAKSITSVAIAYLMQKFPYVFPIVGGRKVEHLYANLEALDISLSPEQMQFLNDTVPFNKGFPYLLFGDGSDYNIVHKAAGHYDKWPAQQAIRPQK</sequence>
<proteinExistence type="evidence at protein level"/>